<name>DRS4_PHYSA</name>
<proteinExistence type="evidence at protein level"/>
<comment type="function">
    <text evidence="1 2 3 4 5 11">Potent antimicrobial peptide with activity against bacteria and protozoa (By similarity). Also has activity against fungi (PubMed:8306981). Also shows activity against enveloped herpes simplex virus type 1 (PubMed:11782932). Probably acts by disturbing membrane functions with its amphipathic structure (Probable). Binds to healthy erythrocytes (this binding is receptor independent), and has strong hemolytic activity (PubMed:9395500). Does not bind to P.falciparum infected erythrocytes, but accumulates within the parasite (PubMed:9395500). Kills the parasite, and only at high concentrations has a hemolytic activity on the host cell (PubMed:9395500). In vitro, shows high spermicidal activities (PubMed:16307969).</text>
</comment>
<comment type="subunit">
    <text evidence="5">Monomer and oligomer. Forms aggregates in aqueous environments.</text>
</comment>
<comment type="subcellular location">
    <subcellularLocation>
        <location evidence="4">Secreted</location>
    </subcellularLocation>
</comment>
<comment type="tissue specificity">
    <text evidence="16">Expressed by the skin glands.</text>
</comment>
<comment type="pharmaceutical">
    <text evidence="12 13 14 17">Derivatives of this peptide may be used as therapeutic agents to treat bacterial infections and malaria, and to prevent infection by herpes simplex virus type 1 and HIV-1.</text>
</comment>
<comment type="pharmaceutical">
    <text evidence="15">May be used as a potent vaginal contraceptive, since it shows spermicidal activities.</text>
</comment>
<comment type="similarity">
    <text evidence="11">Belongs to the frog skin active peptide (FSAP) family. Dermaseptin subfamily.</text>
</comment>
<comment type="online information" name="The antimicrobial peptide database">
    <link uri="https://wangapd3.com/database/query_output.php?ID=0160"/>
</comment>
<keyword id="KW-0002">3D-structure</keyword>
<keyword id="KW-0878">Amphibian defense peptide</keyword>
<keyword id="KW-0044">Antibiotic</keyword>
<keyword id="KW-0929">Antimicrobial</keyword>
<keyword id="KW-0204">Cytolysis</keyword>
<keyword id="KW-0903">Direct protein sequencing</keyword>
<keyword id="KW-0295">Fungicide</keyword>
<keyword id="KW-0354">Hemolysis</keyword>
<keyword id="KW-0582">Pharmaceutical</keyword>
<keyword id="KW-0964">Secreted</keyword>
<reference key="1">
    <citation type="journal article" date="1994" name="Eur. J. Biochem.">
        <title>Isolation and structure of novel defensive peptides from frog skin.</title>
        <authorList>
            <person name="Mor A."/>
            <person name="Nicolas P."/>
        </authorList>
    </citation>
    <scope>PROTEIN SEQUENCE</scope>
    <scope>FUNCTION</scope>
    <scope>SUBCELLULAR LOCATION</scope>
    <source>
        <tissue>Skin secretion</tissue>
    </source>
</reference>
<reference key="2">
    <citation type="journal article" date="1997" name="J. Biol. Chem.">
        <title>Selective cytotoxicity of dermaseptin S3 toward intraerythrocytic Plasmodium falciparum and the underlying molecular basis.</title>
        <authorList>
            <person name="Ghosh J.K."/>
            <person name="Shaool D."/>
            <person name="Guillaud P."/>
            <person name="Ciceron L."/>
            <person name="Mazier D."/>
            <person name="Kustanovich I."/>
            <person name="Shai Y."/>
            <person name="Mor A."/>
        </authorList>
    </citation>
    <scope>FUNCTION</scope>
    <scope>SUBUNIT</scope>
</reference>
<reference key="3">
    <citation type="journal article" date="2001" name="Peptides">
        <title>Affinity driven molecular transfer from erythrocyte membrane to target cells.</title>
        <authorList>
            <person name="Feder R."/>
            <person name="Nehushtai R."/>
            <person name="Mor A."/>
        </authorList>
    </citation>
    <scope>POTENTIAL THERAPEUTIC USAGE</scope>
</reference>
<reference key="4">
    <citation type="journal article" date="2002" name="Antimicrob. Agents Chemother.">
        <title>Antibacterial properties of dermaseptin S4 derivatives with in vivo activity.</title>
        <authorList>
            <person name="Navon-Venezia S."/>
            <person name="Feder R."/>
            <person name="Gaidukov L."/>
            <person name="Carmeli Y."/>
            <person name="Mor A."/>
        </authorList>
    </citation>
    <scope>POTENTIAL THERAPEUTIC USAGE IN TREATMENT OF BACTERIAL INFECTIONS</scope>
</reference>
<reference key="5">
    <citation type="journal article" date="2002" name="Biochemistry">
        <title>Targeting of nonkaryophilic cell-permeable peptides into the nuclei of intact cells by covalently attached nuclear localization signals.</title>
        <authorList>
            <person name="Hariton-Gazal E."/>
            <person name="Feder R."/>
            <person name="Mor A."/>
            <person name="Graessmann A."/>
            <person name="Brack-Werner R."/>
            <person name="Jans D."/>
            <person name="Gilon C."/>
            <person name="Loyter A."/>
        </authorList>
    </citation>
    <scope>POTENTIAL THERAPEUTIC USAGE</scope>
</reference>
<reference key="6">
    <citation type="journal article" date="2002" name="J. Biol. Chem.">
        <title>Direct interaction of dermaseptin S4 aminoheptanoyl derivative with intraerythrocytic malaria parasite leading to increased specific antiparasitic activity in culture.</title>
        <authorList>
            <person name="Efron L."/>
            <person name="Dagan A."/>
            <person name="Gaidukov L."/>
            <person name="Ginsburg H."/>
            <person name="Mor A."/>
        </authorList>
    </citation>
    <scope>POTENTIAL THERAPEUTIC USAGE IN TREATMENT OF MALARIA</scope>
</reference>
<reference key="7">
    <citation type="journal article" date="2002" name="J. Med. Virol.">
        <title>In vitro antiviral activity of dermaseptins against herpes simplex virus type 1.</title>
        <authorList>
            <person name="Belaid A."/>
            <person name="Aouni M."/>
            <person name="Khelifa R."/>
            <person name="Trabelsi A."/>
            <person name="Jemmali M."/>
            <person name="Hani K."/>
        </authorList>
    </citation>
    <scope>POTENTIAL THERAPEUTIC USAGE IN PREVENTION OF HERPES SIMPLEX VIRUS TYPE 1 INFECTION</scope>
</reference>
<reference key="8">
    <citation type="journal article" date="2005" name="Contraception">
        <title>Spermicidal activity of dermaseptins.</title>
        <authorList>
            <person name="Zairi A."/>
            <person name="Belaid A."/>
            <person name="Gahbiche A."/>
            <person name="Hani K."/>
        </authorList>
    </citation>
    <scope>FUNCTION AS SPERMICIDE</scope>
</reference>
<reference key="9">
    <citation type="journal article" date="2005" name="Virology">
        <title>The antimicrobial peptide dermaseptin S4 inhibits HIV-1 infectivity in vitro.</title>
        <authorList>
            <person name="Lorin C."/>
            <person name="Saidi H."/>
            <person name="Belaid A."/>
            <person name="Zairi A."/>
            <person name="Baleux F."/>
            <person name="Hocini H."/>
            <person name="Belec L."/>
            <person name="Hani K."/>
            <person name="Tangy F."/>
        </authorList>
    </citation>
    <scope>POTENTIAL THERAPEUTIC USAGE IN PREVENTION OF HIV-1 INFECTION</scope>
</reference>
<reference key="10">
    <citation type="journal article" date="2006" name="Antimicrob. Agents Chemother.">
        <title>Physicochemical properties that enhance discriminative antibacterial activity of short dermaseptin derivatives.</title>
        <authorList>
            <person name="Rotem S."/>
            <person name="Radzishevsky I."/>
            <person name="Mor A."/>
        </authorList>
    </citation>
    <scope>POTENTIAL THERAPEUTIC USAGE IN TREATMENT OF BACTERIAL INFECTIONS</scope>
</reference>
<reference key="11">
    <citation type="journal article" date="2008" name="Peptides">
        <title>A consistent nomenclature of antimicrobial peptides isolated from frogs of the subfamily Phyllomedusinae.</title>
        <authorList>
            <person name="Amiche M."/>
            <person name="Ladram A."/>
            <person name="Nicolas P."/>
        </authorList>
    </citation>
    <scope>NOMENCLATURE</scope>
</reference>
<reference key="12">
    <citation type="journal article" date="2006" name="J. Biol. Chem.">
        <title>Consequences of N-acylation on structure and membrane binding properties of dermaseptin derivative K4-S4-(1-13).</title>
        <authorList>
            <person name="Shalev D.E."/>
            <person name="Rotem S."/>
            <person name="Fish A."/>
            <person name="Mor A."/>
        </authorList>
    </citation>
    <scope>STRUCTURE BY NMR OF 1-14 OF MUTANT MET-4 AND 14-ALA--ALA-27 DEL</scope>
    <scope>MUTAGENESIS OF MET-4 AND 14-ALA--ALA-27</scope>
</reference>
<protein>
    <recommendedName>
        <fullName evidence="6 7 9">Dermaseptin-S4</fullName>
        <shortName evidence="9">DRS-S4</shortName>
    </recommendedName>
    <alternativeName>
        <fullName evidence="10">Dermaseptin IV</fullName>
        <shortName evidence="10">DS IV</shortName>
    </alternativeName>
    <alternativeName>
        <fullName evidence="8">Dermaseptin-4</fullName>
        <shortName evidence="8">DS4</shortName>
    </alternativeName>
</protein>
<organism>
    <name type="scientific">Phyllomedusa sauvagei</name>
    <name type="common">Sauvage's leaf frog</name>
    <dbReference type="NCBI Taxonomy" id="8395"/>
    <lineage>
        <taxon>Eukaryota</taxon>
        <taxon>Metazoa</taxon>
        <taxon>Chordata</taxon>
        <taxon>Craniata</taxon>
        <taxon>Vertebrata</taxon>
        <taxon>Euteleostomi</taxon>
        <taxon>Amphibia</taxon>
        <taxon>Batrachia</taxon>
        <taxon>Anura</taxon>
        <taxon>Neobatrachia</taxon>
        <taxon>Hyloidea</taxon>
        <taxon>Hylidae</taxon>
        <taxon>Phyllomedusinae</taxon>
        <taxon>Phyllomedusa</taxon>
    </lineage>
</organism>
<accession>P80280</accession>
<dbReference type="PDB" id="2DCX">
    <property type="method" value="NMR"/>
    <property type="chains" value="A=1-13"/>
</dbReference>
<dbReference type="PDB" id="2DD6">
    <property type="method" value="NMR"/>
    <property type="chains" value="A=1-13"/>
</dbReference>
<dbReference type="PDBsum" id="2DCX"/>
<dbReference type="PDBsum" id="2DD6"/>
<dbReference type="SMR" id="P80280"/>
<dbReference type="EvolutionaryTrace" id="P80280"/>
<dbReference type="GO" id="GO:0005576">
    <property type="term" value="C:extracellular region"/>
    <property type="evidence" value="ECO:0007669"/>
    <property type="project" value="UniProtKB-SubCell"/>
</dbReference>
<dbReference type="GO" id="GO:0042742">
    <property type="term" value="P:defense response to bacterium"/>
    <property type="evidence" value="ECO:0007669"/>
    <property type="project" value="UniProtKB-KW"/>
</dbReference>
<dbReference type="GO" id="GO:0050832">
    <property type="term" value="P:defense response to fungus"/>
    <property type="evidence" value="ECO:0007669"/>
    <property type="project" value="UniProtKB-KW"/>
</dbReference>
<dbReference type="GO" id="GO:0031640">
    <property type="term" value="P:killing of cells of another organism"/>
    <property type="evidence" value="ECO:0007669"/>
    <property type="project" value="UniProtKB-KW"/>
</dbReference>
<sequence length="27" mass="2779">ALWMTLLKKVLKAAAKALNAVLVGANA</sequence>
<feature type="peptide" id="PRO_0000043642" description="Dermaseptin-S4" evidence="4">
    <location>
        <begin position="1"/>
        <end position="27"/>
    </location>
</feature>
<feature type="mutagenesis site" description="K4-S4-(1-13) selectively disrupts the plasma membrane of the intracellular parasite P.falciparum without harming that of the mammalian host cell; when associated with 14-A--A-27 DEL.">
    <original>M</original>
    <variation>K</variation>
    <location>
        <position position="4"/>
    </location>
</feature>
<feature type="mutagenesis site" description="K4-S4-(1-13) selectively disrupts the plasma membrane of the intracellular parasite P.falciparum without harming that of the mammalian host cell; when associated with K-4.">
    <location>
        <begin position="14"/>
        <end position="27"/>
    </location>
</feature>
<feature type="turn" evidence="18">
    <location>
        <begin position="4"/>
        <end position="6"/>
    </location>
</feature>
<feature type="strand" evidence="18">
    <location>
        <begin position="7"/>
        <end position="11"/>
    </location>
</feature>
<evidence type="ECO:0000250" key="1">
    <source>
        <dbReference type="UniProtKB" id="P24302"/>
    </source>
</evidence>
<evidence type="ECO:0000269" key="2">
    <source>
    </source>
</evidence>
<evidence type="ECO:0000269" key="3">
    <source>
    </source>
</evidence>
<evidence type="ECO:0000269" key="4">
    <source>
    </source>
</evidence>
<evidence type="ECO:0000269" key="5">
    <source>
    </source>
</evidence>
<evidence type="ECO:0000303" key="6">
    <source>
    </source>
</evidence>
<evidence type="ECO:0000303" key="7">
    <source>
    </source>
</evidence>
<evidence type="ECO:0000303" key="8">
    <source>
    </source>
</evidence>
<evidence type="ECO:0000303" key="9">
    <source>
    </source>
</evidence>
<evidence type="ECO:0000303" key="10">
    <source>
    </source>
</evidence>
<evidence type="ECO:0000305" key="11"/>
<evidence type="ECO:0000305" key="12">
    <source>
    </source>
</evidence>
<evidence type="ECO:0000305" key="13">
    <source>
    </source>
</evidence>
<evidence type="ECO:0000305" key="14">
    <source>
    </source>
</evidence>
<evidence type="ECO:0000305" key="15">
    <source>
    </source>
</evidence>
<evidence type="ECO:0000305" key="16">
    <source>
    </source>
</evidence>
<evidence type="ECO:0000305" key="17">
    <source>
    </source>
</evidence>
<evidence type="ECO:0007829" key="18">
    <source>
        <dbReference type="PDB" id="2DCX"/>
    </source>
</evidence>